<feature type="chain" id="PRO_1000007465" description="Large ribosomal subunit protein uL29">
    <location>
        <begin position="1"/>
        <end position="77"/>
    </location>
</feature>
<gene>
    <name evidence="1" type="primary">rpmC</name>
    <name type="ordered locus">jk1825</name>
</gene>
<accession>Q4JT55</accession>
<reference key="1">
    <citation type="journal article" date="2005" name="J. Bacteriol.">
        <title>Complete genome sequence and analysis of the multiresistant nosocomial pathogen Corynebacterium jeikeium K411, a lipid-requiring bacterium of the human skin flora.</title>
        <authorList>
            <person name="Tauch A."/>
            <person name="Kaiser O."/>
            <person name="Hain T."/>
            <person name="Goesmann A."/>
            <person name="Weisshaar B."/>
            <person name="Albersmeier A."/>
            <person name="Bekel T."/>
            <person name="Bischoff N."/>
            <person name="Brune I."/>
            <person name="Chakraborty T."/>
            <person name="Kalinowski J."/>
            <person name="Meyer F."/>
            <person name="Rupp O."/>
            <person name="Schneiker S."/>
            <person name="Viehoever P."/>
            <person name="Puehler A."/>
        </authorList>
    </citation>
    <scope>NUCLEOTIDE SEQUENCE [LARGE SCALE GENOMIC DNA]</scope>
    <source>
        <strain>K411</strain>
    </source>
</reference>
<organism>
    <name type="scientific">Corynebacterium jeikeium (strain K411)</name>
    <dbReference type="NCBI Taxonomy" id="306537"/>
    <lineage>
        <taxon>Bacteria</taxon>
        <taxon>Bacillati</taxon>
        <taxon>Actinomycetota</taxon>
        <taxon>Actinomycetes</taxon>
        <taxon>Mycobacteriales</taxon>
        <taxon>Corynebacteriaceae</taxon>
        <taxon>Corynebacterium</taxon>
    </lineage>
</organism>
<sequence length="77" mass="8665">MATGTPAHELRELNNEELTTRLREAKEELFNLRFQAATGQLTNNRRLGVVKRDIARIYTVLRERELGLSTNPGGDAA</sequence>
<keyword id="KW-1185">Reference proteome</keyword>
<keyword id="KW-0687">Ribonucleoprotein</keyword>
<keyword id="KW-0689">Ribosomal protein</keyword>
<evidence type="ECO:0000255" key="1">
    <source>
        <dbReference type="HAMAP-Rule" id="MF_00374"/>
    </source>
</evidence>
<evidence type="ECO:0000305" key="2"/>
<name>RL29_CORJK</name>
<dbReference type="EMBL" id="CR931997">
    <property type="protein sequence ID" value="CAI38002.1"/>
    <property type="molecule type" value="Genomic_DNA"/>
</dbReference>
<dbReference type="RefSeq" id="WP_005291954.1">
    <property type="nucleotide sequence ID" value="NC_007164.1"/>
</dbReference>
<dbReference type="SMR" id="Q4JT55"/>
<dbReference type="STRING" id="306537.jk1825"/>
<dbReference type="GeneID" id="92739448"/>
<dbReference type="KEGG" id="cjk:jk1825"/>
<dbReference type="eggNOG" id="COG0255">
    <property type="taxonomic scope" value="Bacteria"/>
</dbReference>
<dbReference type="HOGENOM" id="CLU_158491_3_3_11"/>
<dbReference type="OrthoDB" id="9815192at2"/>
<dbReference type="Proteomes" id="UP000000545">
    <property type="component" value="Chromosome"/>
</dbReference>
<dbReference type="GO" id="GO:0022625">
    <property type="term" value="C:cytosolic large ribosomal subunit"/>
    <property type="evidence" value="ECO:0007669"/>
    <property type="project" value="TreeGrafter"/>
</dbReference>
<dbReference type="GO" id="GO:0003735">
    <property type="term" value="F:structural constituent of ribosome"/>
    <property type="evidence" value="ECO:0007669"/>
    <property type="project" value="InterPro"/>
</dbReference>
<dbReference type="GO" id="GO:0006412">
    <property type="term" value="P:translation"/>
    <property type="evidence" value="ECO:0007669"/>
    <property type="project" value="UniProtKB-UniRule"/>
</dbReference>
<dbReference type="CDD" id="cd00427">
    <property type="entry name" value="Ribosomal_L29_HIP"/>
    <property type="match status" value="1"/>
</dbReference>
<dbReference type="FunFam" id="1.10.287.310:FF:000001">
    <property type="entry name" value="50S ribosomal protein L29"/>
    <property type="match status" value="1"/>
</dbReference>
<dbReference type="Gene3D" id="1.10.287.310">
    <property type="match status" value="1"/>
</dbReference>
<dbReference type="HAMAP" id="MF_00374">
    <property type="entry name" value="Ribosomal_uL29"/>
    <property type="match status" value="1"/>
</dbReference>
<dbReference type="InterPro" id="IPR050063">
    <property type="entry name" value="Ribosomal_protein_uL29"/>
</dbReference>
<dbReference type="InterPro" id="IPR001854">
    <property type="entry name" value="Ribosomal_uL29"/>
</dbReference>
<dbReference type="InterPro" id="IPR018254">
    <property type="entry name" value="Ribosomal_uL29_CS"/>
</dbReference>
<dbReference type="InterPro" id="IPR036049">
    <property type="entry name" value="Ribosomal_uL29_sf"/>
</dbReference>
<dbReference type="NCBIfam" id="TIGR00012">
    <property type="entry name" value="L29"/>
    <property type="match status" value="1"/>
</dbReference>
<dbReference type="PANTHER" id="PTHR10916">
    <property type="entry name" value="60S RIBOSOMAL PROTEIN L35/50S RIBOSOMAL PROTEIN L29"/>
    <property type="match status" value="1"/>
</dbReference>
<dbReference type="PANTHER" id="PTHR10916:SF0">
    <property type="entry name" value="LARGE RIBOSOMAL SUBUNIT PROTEIN UL29C"/>
    <property type="match status" value="1"/>
</dbReference>
<dbReference type="Pfam" id="PF00831">
    <property type="entry name" value="Ribosomal_L29"/>
    <property type="match status" value="1"/>
</dbReference>
<dbReference type="SUPFAM" id="SSF46561">
    <property type="entry name" value="Ribosomal protein L29 (L29p)"/>
    <property type="match status" value="1"/>
</dbReference>
<dbReference type="PROSITE" id="PS00579">
    <property type="entry name" value="RIBOSOMAL_L29"/>
    <property type="match status" value="1"/>
</dbReference>
<comment type="similarity">
    <text evidence="1">Belongs to the universal ribosomal protein uL29 family.</text>
</comment>
<proteinExistence type="inferred from homology"/>
<protein>
    <recommendedName>
        <fullName evidence="1">Large ribosomal subunit protein uL29</fullName>
    </recommendedName>
    <alternativeName>
        <fullName evidence="2">50S ribosomal protein L29</fullName>
    </alternativeName>
</protein>